<gene>
    <name evidence="1" type="primary">nuoK</name>
    <name type="ordered locus">BamMC406_2156</name>
</gene>
<protein>
    <recommendedName>
        <fullName evidence="1">NADH-quinone oxidoreductase subunit K</fullName>
        <ecNumber evidence="1">7.1.1.-</ecNumber>
    </recommendedName>
    <alternativeName>
        <fullName evidence="1">NADH dehydrogenase I subunit K</fullName>
    </alternativeName>
    <alternativeName>
        <fullName evidence="1">NDH-1 subunit K</fullName>
    </alternativeName>
</protein>
<reference key="1">
    <citation type="submission" date="2008-04" db="EMBL/GenBank/DDBJ databases">
        <title>Complete sequence of chromosome 1 of Burkholderia ambifaria MC40-6.</title>
        <authorList>
            <person name="Copeland A."/>
            <person name="Lucas S."/>
            <person name="Lapidus A."/>
            <person name="Glavina del Rio T."/>
            <person name="Dalin E."/>
            <person name="Tice H."/>
            <person name="Pitluck S."/>
            <person name="Chain P."/>
            <person name="Malfatti S."/>
            <person name="Shin M."/>
            <person name="Vergez L."/>
            <person name="Lang D."/>
            <person name="Schmutz J."/>
            <person name="Larimer F."/>
            <person name="Land M."/>
            <person name="Hauser L."/>
            <person name="Kyrpides N."/>
            <person name="Lykidis A."/>
            <person name="Ramette A."/>
            <person name="Konstantinidis K."/>
            <person name="Tiedje J."/>
            <person name="Richardson P."/>
        </authorList>
    </citation>
    <scope>NUCLEOTIDE SEQUENCE [LARGE SCALE GENOMIC DNA]</scope>
    <source>
        <strain>MC40-6</strain>
    </source>
</reference>
<evidence type="ECO:0000255" key="1">
    <source>
        <dbReference type="HAMAP-Rule" id="MF_01456"/>
    </source>
</evidence>
<keyword id="KW-0997">Cell inner membrane</keyword>
<keyword id="KW-1003">Cell membrane</keyword>
<keyword id="KW-0472">Membrane</keyword>
<keyword id="KW-0520">NAD</keyword>
<keyword id="KW-0874">Quinone</keyword>
<keyword id="KW-1278">Translocase</keyword>
<keyword id="KW-0812">Transmembrane</keyword>
<keyword id="KW-1133">Transmembrane helix</keyword>
<keyword id="KW-0813">Transport</keyword>
<keyword id="KW-0830">Ubiquinone</keyword>
<name>NUOK_BURA4</name>
<feature type="chain" id="PRO_0000389983" description="NADH-quinone oxidoreductase subunit K">
    <location>
        <begin position="1"/>
        <end position="101"/>
    </location>
</feature>
<feature type="transmembrane region" description="Helical" evidence="1">
    <location>
        <begin position="4"/>
        <end position="24"/>
    </location>
</feature>
<feature type="transmembrane region" description="Helical" evidence="1">
    <location>
        <begin position="29"/>
        <end position="49"/>
    </location>
</feature>
<feature type="transmembrane region" description="Helical" evidence="1">
    <location>
        <begin position="61"/>
        <end position="81"/>
    </location>
</feature>
<dbReference type="EC" id="7.1.1.-" evidence="1"/>
<dbReference type="EMBL" id="CP001025">
    <property type="protein sequence ID" value="ACB64635.1"/>
    <property type="molecule type" value="Genomic_DNA"/>
</dbReference>
<dbReference type="RefSeq" id="WP_004185739.1">
    <property type="nucleotide sequence ID" value="NC_010551.1"/>
</dbReference>
<dbReference type="SMR" id="B1YTP7"/>
<dbReference type="GeneID" id="98107315"/>
<dbReference type="KEGG" id="bac:BamMC406_2156"/>
<dbReference type="HOGENOM" id="CLU_144724_2_0_4"/>
<dbReference type="Proteomes" id="UP000001680">
    <property type="component" value="Chromosome 1"/>
</dbReference>
<dbReference type="GO" id="GO:0030964">
    <property type="term" value="C:NADH dehydrogenase complex"/>
    <property type="evidence" value="ECO:0007669"/>
    <property type="project" value="TreeGrafter"/>
</dbReference>
<dbReference type="GO" id="GO:0005886">
    <property type="term" value="C:plasma membrane"/>
    <property type="evidence" value="ECO:0007669"/>
    <property type="project" value="UniProtKB-SubCell"/>
</dbReference>
<dbReference type="GO" id="GO:0050136">
    <property type="term" value="F:NADH:ubiquinone reductase (non-electrogenic) activity"/>
    <property type="evidence" value="ECO:0007669"/>
    <property type="project" value="UniProtKB-UniRule"/>
</dbReference>
<dbReference type="GO" id="GO:0048038">
    <property type="term" value="F:quinone binding"/>
    <property type="evidence" value="ECO:0007669"/>
    <property type="project" value="UniProtKB-KW"/>
</dbReference>
<dbReference type="GO" id="GO:0042773">
    <property type="term" value="P:ATP synthesis coupled electron transport"/>
    <property type="evidence" value="ECO:0007669"/>
    <property type="project" value="InterPro"/>
</dbReference>
<dbReference type="FunFam" id="1.10.287.3510:FF:000001">
    <property type="entry name" value="NADH-quinone oxidoreductase subunit K"/>
    <property type="match status" value="1"/>
</dbReference>
<dbReference type="Gene3D" id="1.10.287.3510">
    <property type="match status" value="1"/>
</dbReference>
<dbReference type="HAMAP" id="MF_01456">
    <property type="entry name" value="NDH1_NuoK"/>
    <property type="match status" value="1"/>
</dbReference>
<dbReference type="InterPro" id="IPR001133">
    <property type="entry name" value="NADH_UbQ_OxRdtase_chain4L/K"/>
</dbReference>
<dbReference type="InterPro" id="IPR039428">
    <property type="entry name" value="NUOK/Mnh_C1-like"/>
</dbReference>
<dbReference type="NCBIfam" id="NF004320">
    <property type="entry name" value="PRK05715.1-2"/>
    <property type="match status" value="1"/>
</dbReference>
<dbReference type="NCBIfam" id="NF004321">
    <property type="entry name" value="PRK05715.1-3"/>
    <property type="match status" value="1"/>
</dbReference>
<dbReference type="NCBIfam" id="NF004323">
    <property type="entry name" value="PRK05715.1-5"/>
    <property type="match status" value="1"/>
</dbReference>
<dbReference type="PANTHER" id="PTHR11434:SF21">
    <property type="entry name" value="NADH DEHYDROGENASE SUBUNIT 4L-RELATED"/>
    <property type="match status" value="1"/>
</dbReference>
<dbReference type="PANTHER" id="PTHR11434">
    <property type="entry name" value="NADH-UBIQUINONE OXIDOREDUCTASE SUBUNIT ND4L"/>
    <property type="match status" value="1"/>
</dbReference>
<dbReference type="Pfam" id="PF00420">
    <property type="entry name" value="Oxidored_q2"/>
    <property type="match status" value="1"/>
</dbReference>
<proteinExistence type="inferred from homology"/>
<organism>
    <name type="scientific">Burkholderia ambifaria (strain MC40-6)</name>
    <dbReference type="NCBI Taxonomy" id="398577"/>
    <lineage>
        <taxon>Bacteria</taxon>
        <taxon>Pseudomonadati</taxon>
        <taxon>Pseudomonadota</taxon>
        <taxon>Betaproteobacteria</taxon>
        <taxon>Burkholderiales</taxon>
        <taxon>Burkholderiaceae</taxon>
        <taxon>Burkholderia</taxon>
        <taxon>Burkholderia cepacia complex</taxon>
    </lineage>
</organism>
<accession>B1YTP7</accession>
<comment type="function">
    <text evidence="1">NDH-1 shuttles electrons from NADH, via FMN and iron-sulfur (Fe-S) centers, to quinones in the respiratory chain. The immediate electron acceptor for the enzyme in this species is believed to be ubiquinone. Couples the redox reaction to proton translocation (for every two electrons transferred, four hydrogen ions are translocated across the cytoplasmic membrane), and thus conserves the redox energy in a proton gradient.</text>
</comment>
<comment type="catalytic activity">
    <reaction evidence="1">
        <text>a quinone + NADH + 5 H(+)(in) = a quinol + NAD(+) + 4 H(+)(out)</text>
        <dbReference type="Rhea" id="RHEA:57888"/>
        <dbReference type="ChEBI" id="CHEBI:15378"/>
        <dbReference type="ChEBI" id="CHEBI:24646"/>
        <dbReference type="ChEBI" id="CHEBI:57540"/>
        <dbReference type="ChEBI" id="CHEBI:57945"/>
        <dbReference type="ChEBI" id="CHEBI:132124"/>
    </reaction>
</comment>
<comment type="subunit">
    <text evidence="1">NDH-1 is composed of 14 different subunits. Subunits NuoA, H, J, K, L, M, N constitute the membrane sector of the complex.</text>
</comment>
<comment type="subcellular location">
    <subcellularLocation>
        <location evidence="1">Cell inner membrane</location>
        <topology evidence="1">Multi-pass membrane protein</topology>
    </subcellularLocation>
</comment>
<comment type="similarity">
    <text evidence="1">Belongs to the complex I subunit 4L family.</text>
</comment>
<sequence>MLTLAHYLVLGAILFAIAIVGIFLNRRNIIIILMAIELMLLAVNTNFVAFSHYLGDVHGQIFVFFVLTVAAAEAAIGLAILVTLFRKLDTINVEDLDQLKG</sequence>